<keyword id="KW-0240">DNA-directed RNA polymerase</keyword>
<keyword id="KW-0460">Magnesium</keyword>
<keyword id="KW-0479">Metal-binding</keyword>
<keyword id="KW-0548">Nucleotidyltransferase</keyword>
<keyword id="KW-0804">Transcription</keyword>
<keyword id="KW-0808">Transferase</keyword>
<keyword id="KW-0862">Zinc</keyword>
<protein>
    <recommendedName>
        <fullName evidence="1">DNA-directed RNA polymerase subunit gamma</fullName>
        <shortName evidence="1">RNAP subunit gamma</shortName>
        <ecNumber evidence="1">2.7.7.6</ecNumber>
    </recommendedName>
    <alternativeName>
        <fullName evidence="1">RNA polymerase subunit gamma</fullName>
    </alternativeName>
    <alternativeName>
        <fullName evidence="1">Transcriptase subunit gamma</fullName>
    </alternativeName>
</protein>
<sequence>MTNSNLRTENHFDYVKISIASPQRIMDWGQRTLPNGQVVGEVTKPETINYRTLKPEMDGLFCEKIFGPSKDWECHCGKYKRVRHRGIVCERCGVEVTESRVRRHRMGYIKLAAPVSHVWYLKGIPSYVAILLDIPLRDVEQIVYFNCYVVLDPGDHKELKYKQLLTEDEWLEIEDEIYAEDSIIENEPIVGIGAEALKQLLEDLDLNQVAEELREEITNSKGQKRAKLIKRIRVIDNFIATNAKPEWMVLDAIPVIPPDLRPMVQLDGGRFATSDLNDLYRRVINRNNRLARLQEILAPEIIVRNEKRMLQEAVDALIDNGRRGRTVVGANNRALKSLSDIIEGKQGRFRQNLLGKRVDYSGRSVIVVGPKLKMHQCGLPKEMAIELFQPFVIHRLIRQNIVNNIKAAKKLIQKADDEVMQVLQEVIDGHPILLNRAPTLHRLGIQAFEPKLVGGRAIQLHPLVCPAFNADFDGDQMAVHVPLALEAQTEARMLMLASNNILSPATGEPIVTPSQDMVLGSYYLTALQPNYQKPEFGDNKTTFASLEDVIFAFEDKRLSLHEWVWVRFNGEVEDEDEMRSPQKTQELEDGSKLEIWNLRRDRFDSDNNLISRFVLTTVGRVVMNYTIIDSVSKT</sequence>
<organism>
    <name type="scientific">Prochlorococcus marinus (strain MIT 9215)</name>
    <dbReference type="NCBI Taxonomy" id="93060"/>
    <lineage>
        <taxon>Bacteria</taxon>
        <taxon>Bacillati</taxon>
        <taxon>Cyanobacteriota</taxon>
        <taxon>Cyanophyceae</taxon>
        <taxon>Synechococcales</taxon>
        <taxon>Prochlorococcaceae</taxon>
        <taxon>Prochlorococcus</taxon>
    </lineage>
</organism>
<evidence type="ECO:0000255" key="1">
    <source>
        <dbReference type="HAMAP-Rule" id="MF_01323"/>
    </source>
</evidence>
<reference key="1">
    <citation type="journal article" date="2007" name="PLoS Genet.">
        <title>Patterns and implications of gene gain and loss in the evolution of Prochlorococcus.</title>
        <authorList>
            <person name="Kettler G.C."/>
            <person name="Martiny A.C."/>
            <person name="Huang K."/>
            <person name="Zucker J."/>
            <person name="Coleman M.L."/>
            <person name="Rodrigue S."/>
            <person name="Chen F."/>
            <person name="Lapidus A."/>
            <person name="Ferriera S."/>
            <person name="Johnson J."/>
            <person name="Steglich C."/>
            <person name="Church G.M."/>
            <person name="Richardson P."/>
            <person name="Chisholm S.W."/>
        </authorList>
    </citation>
    <scope>NUCLEOTIDE SEQUENCE [LARGE SCALE GENOMIC DNA]</scope>
    <source>
        <strain>MIT 9215</strain>
    </source>
</reference>
<name>RPOC1_PROM2</name>
<feature type="chain" id="PRO_1000067556" description="DNA-directed RNA polymerase subunit gamma">
    <location>
        <begin position="1"/>
        <end position="634"/>
    </location>
</feature>
<feature type="binding site" evidence="1">
    <location>
        <position position="74"/>
    </location>
    <ligand>
        <name>Zn(2+)</name>
        <dbReference type="ChEBI" id="CHEBI:29105"/>
    </ligand>
</feature>
<feature type="binding site" evidence="1">
    <location>
        <position position="76"/>
    </location>
    <ligand>
        <name>Zn(2+)</name>
        <dbReference type="ChEBI" id="CHEBI:29105"/>
    </ligand>
</feature>
<feature type="binding site" evidence="1">
    <location>
        <position position="89"/>
    </location>
    <ligand>
        <name>Zn(2+)</name>
        <dbReference type="ChEBI" id="CHEBI:29105"/>
    </ligand>
</feature>
<feature type="binding site" evidence="1">
    <location>
        <position position="92"/>
    </location>
    <ligand>
        <name>Zn(2+)</name>
        <dbReference type="ChEBI" id="CHEBI:29105"/>
    </ligand>
</feature>
<feature type="binding site" evidence="1">
    <location>
        <position position="471"/>
    </location>
    <ligand>
        <name>Mg(2+)</name>
        <dbReference type="ChEBI" id="CHEBI:18420"/>
    </ligand>
</feature>
<feature type="binding site" evidence="1">
    <location>
        <position position="473"/>
    </location>
    <ligand>
        <name>Mg(2+)</name>
        <dbReference type="ChEBI" id="CHEBI:18420"/>
    </ligand>
</feature>
<feature type="binding site" evidence="1">
    <location>
        <position position="475"/>
    </location>
    <ligand>
        <name>Mg(2+)</name>
        <dbReference type="ChEBI" id="CHEBI:18420"/>
    </ligand>
</feature>
<proteinExistence type="inferred from homology"/>
<dbReference type="EC" id="2.7.7.6" evidence="1"/>
<dbReference type="EMBL" id="CP000825">
    <property type="protein sequence ID" value="ABV51366.1"/>
    <property type="molecule type" value="Genomic_DNA"/>
</dbReference>
<dbReference type="RefSeq" id="WP_002806193.1">
    <property type="nucleotide sequence ID" value="NC_009840.1"/>
</dbReference>
<dbReference type="SMR" id="A8G6Y5"/>
<dbReference type="STRING" id="93060.P9215_17531"/>
<dbReference type="KEGG" id="pmh:P9215_17531"/>
<dbReference type="eggNOG" id="COG0086">
    <property type="taxonomic scope" value="Bacteria"/>
</dbReference>
<dbReference type="HOGENOM" id="CLU_030022_2_0_3"/>
<dbReference type="OrthoDB" id="9815296at2"/>
<dbReference type="Proteomes" id="UP000002014">
    <property type="component" value="Chromosome"/>
</dbReference>
<dbReference type="GO" id="GO:0000428">
    <property type="term" value="C:DNA-directed RNA polymerase complex"/>
    <property type="evidence" value="ECO:0007669"/>
    <property type="project" value="UniProtKB-KW"/>
</dbReference>
<dbReference type="GO" id="GO:0003677">
    <property type="term" value="F:DNA binding"/>
    <property type="evidence" value="ECO:0007669"/>
    <property type="project" value="UniProtKB-UniRule"/>
</dbReference>
<dbReference type="GO" id="GO:0003899">
    <property type="term" value="F:DNA-directed RNA polymerase activity"/>
    <property type="evidence" value="ECO:0007669"/>
    <property type="project" value="UniProtKB-UniRule"/>
</dbReference>
<dbReference type="GO" id="GO:0000287">
    <property type="term" value="F:magnesium ion binding"/>
    <property type="evidence" value="ECO:0007669"/>
    <property type="project" value="UniProtKB-UniRule"/>
</dbReference>
<dbReference type="GO" id="GO:0008270">
    <property type="term" value="F:zinc ion binding"/>
    <property type="evidence" value="ECO:0007669"/>
    <property type="project" value="UniProtKB-UniRule"/>
</dbReference>
<dbReference type="GO" id="GO:0006351">
    <property type="term" value="P:DNA-templated transcription"/>
    <property type="evidence" value="ECO:0007669"/>
    <property type="project" value="UniProtKB-UniRule"/>
</dbReference>
<dbReference type="Gene3D" id="1.10.40.90">
    <property type="match status" value="1"/>
</dbReference>
<dbReference type="Gene3D" id="2.40.40.20">
    <property type="match status" value="1"/>
</dbReference>
<dbReference type="Gene3D" id="4.10.860.120">
    <property type="entry name" value="RNA polymerase II, clamp domain"/>
    <property type="match status" value="1"/>
</dbReference>
<dbReference type="Gene3D" id="1.10.274.100">
    <property type="entry name" value="RNA polymerase Rpb1, domain 3"/>
    <property type="match status" value="1"/>
</dbReference>
<dbReference type="HAMAP" id="MF_01323">
    <property type="entry name" value="RNApol_bact_RpoC1"/>
    <property type="match status" value="1"/>
</dbReference>
<dbReference type="InterPro" id="IPR012755">
    <property type="entry name" value="DNA-dir_RpoC1_gamma"/>
</dbReference>
<dbReference type="InterPro" id="IPR045867">
    <property type="entry name" value="DNA-dir_RpoC_beta_prime"/>
</dbReference>
<dbReference type="InterPro" id="IPR000722">
    <property type="entry name" value="RNA_pol_asu"/>
</dbReference>
<dbReference type="InterPro" id="IPR006592">
    <property type="entry name" value="RNA_pol_N"/>
</dbReference>
<dbReference type="InterPro" id="IPR007080">
    <property type="entry name" value="RNA_pol_Rpb1_1"/>
</dbReference>
<dbReference type="InterPro" id="IPR007066">
    <property type="entry name" value="RNA_pol_Rpb1_3"/>
</dbReference>
<dbReference type="InterPro" id="IPR042102">
    <property type="entry name" value="RNA_pol_Rpb1_3_sf"/>
</dbReference>
<dbReference type="InterPro" id="IPR044893">
    <property type="entry name" value="RNA_pol_Rpb1_clamp_domain"/>
</dbReference>
<dbReference type="InterPro" id="IPR034678">
    <property type="entry name" value="RNApol_RpoC1"/>
</dbReference>
<dbReference type="NCBIfam" id="NF002729">
    <property type="entry name" value="PRK02625.1"/>
    <property type="match status" value="1"/>
</dbReference>
<dbReference type="NCBIfam" id="TIGR02387">
    <property type="entry name" value="rpoC1_cyan"/>
    <property type="match status" value="1"/>
</dbReference>
<dbReference type="PANTHER" id="PTHR19376">
    <property type="entry name" value="DNA-DIRECTED RNA POLYMERASE"/>
    <property type="match status" value="1"/>
</dbReference>
<dbReference type="PANTHER" id="PTHR19376:SF54">
    <property type="entry name" value="DNA-DIRECTED RNA POLYMERASE SUBUNIT BETA"/>
    <property type="match status" value="1"/>
</dbReference>
<dbReference type="Pfam" id="PF04997">
    <property type="entry name" value="RNA_pol_Rpb1_1"/>
    <property type="match status" value="1"/>
</dbReference>
<dbReference type="Pfam" id="PF00623">
    <property type="entry name" value="RNA_pol_Rpb1_2"/>
    <property type="match status" value="1"/>
</dbReference>
<dbReference type="Pfam" id="PF04983">
    <property type="entry name" value="RNA_pol_Rpb1_3"/>
    <property type="match status" value="1"/>
</dbReference>
<dbReference type="SMART" id="SM00663">
    <property type="entry name" value="RPOLA_N"/>
    <property type="match status" value="1"/>
</dbReference>
<dbReference type="SUPFAM" id="SSF64484">
    <property type="entry name" value="beta and beta-prime subunits of DNA dependent RNA-polymerase"/>
    <property type="match status" value="1"/>
</dbReference>
<comment type="function">
    <text evidence="1">DNA-dependent RNA polymerase catalyzes the transcription of DNA into RNA using the four ribonucleoside triphosphates as substrates.</text>
</comment>
<comment type="catalytic activity">
    <reaction evidence="1">
        <text>RNA(n) + a ribonucleoside 5'-triphosphate = RNA(n+1) + diphosphate</text>
        <dbReference type="Rhea" id="RHEA:21248"/>
        <dbReference type="Rhea" id="RHEA-COMP:14527"/>
        <dbReference type="Rhea" id="RHEA-COMP:17342"/>
        <dbReference type="ChEBI" id="CHEBI:33019"/>
        <dbReference type="ChEBI" id="CHEBI:61557"/>
        <dbReference type="ChEBI" id="CHEBI:140395"/>
        <dbReference type="EC" id="2.7.7.6"/>
    </reaction>
</comment>
<comment type="cofactor">
    <cofactor evidence="1">
        <name>Mg(2+)</name>
        <dbReference type="ChEBI" id="CHEBI:18420"/>
    </cofactor>
    <text evidence="1">Binds 1 Mg(2+) ion per subunit.</text>
</comment>
<comment type="cofactor">
    <cofactor evidence="1">
        <name>Zn(2+)</name>
        <dbReference type="ChEBI" id="CHEBI:29105"/>
    </cofactor>
    <text evidence="1">Binds 1 Zn(2+) ion per subunit.</text>
</comment>
<comment type="subunit">
    <text evidence="1">In cyanobacteria the RNAP catalytic core is composed of 2 alpha, 1 beta, 1 beta', 1 gamma and 1 omega subunit. When a sigma factor is associated with the core the holoenzyme is formed, which can initiate transcription.</text>
</comment>
<comment type="similarity">
    <text evidence="1">Belongs to the RNA polymerase beta' chain family. RpoC1 subfamily.</text>
</comment>
<accession>A8G6Y5</accession>
<gene>
    <name evidence="1" type="primary">rpoC1</name>
    <name type="ordered locus">P9215_17531</name>
</gene>